<organism>
    <name type="scientific">Conus litteratus</name>
    <name type="common">Lettered cone</name>
    <dbReference type="NCBI Taxonomy" id="89445"/>
    <lineage>
        <taxon>Eukaryota</taxon>
        <taxon>Metazoa</taxon>
        <taxon>Spiralia</taxon>
        <taxon>Lophotrochozoa</taxon>
        <taxon>Mollusca</taxon>
        <taxon>Gastropoda</taxon>
        <taxon>Caenogastropoda</taxon>
        <taxon>Neogastropoda</taxon>
        <taxon>Conoidea</taxon>
        <taxon>Conidae</taxon>
        <taxon>Conus</taxon>
        <taxon>Elisaconus</taxon>
    </lineage>
</organism>
<feature type="signal peptide" evidence="2">
    <location>
        <begin position="1"/>
        <end position="19"/>
    </location>
</feature>
<feature type="propeptide" id="PRO_0000274066" evidence="1">
    <location>
        <begin position="20"/>
        <end position="49"/>
    </location>
</feature>
<feature type="peptide" id="PRO_0000274067" description="Conotoxin LeDr192">
    <location>
        <begin position="51"/>
        <end position="65"/>
    </location>
</feature>
<feature type="modified residue" description="Threonine amide" evidence="1">
    <location>
        <position position="65"/>
    </location>
</feature>
<evidence type="ECO:0000250" key="1"/>
<evidence type="ECO:0000255" key="2"/>
<evidence type="ECO:0000303" key="3">
    <source>
    </source>
</evidence>
<evidence type="ECO:0000305" key="4"/>
<evidence type="ECO:0000305" key="5">
    <source>
    </source>
</evidence>
<sequence length="67" mass="7597">MRCFPVFIILLLLIASAPCFDARTKTDDDVPLSPLRDNLKRTIRTRLNIRECCEDGWCCTAAPLTGR</sequence>
<keyword id="KW-0027">Amidation</keyword>
<keyword id="KW-0165">Cleavage on pair of basic residues</keyword>
<keyword id="KW-1015">Disulfide bond</keyword>
<keyword id="KW-0964">Secreted</keyword>
<keyword id="KW-0732">Signal</keyword>
<keyword id="KW-0800">Toxin</keyword>
<comment type="subcellular location">
    <subcellularLocation>
        <location evidence="1">Secreted</location>
    </subcellularLocation>
</comment>
<comment type="tissue specificity">
    <text>Expressed by the venom duct.</text>
</comment>
<comment type="domain">
    <text>The cysteine framework is V (CC-CC).</text>
</comment>
<comment type="PTM">
    <text evidence="4">Contains 2 disulfide bonds that can be either 'C1-C3, C2-C4' or 'C1-C4, C2-C3', since these disulfide connectivities have been observed for conotoxins with cysteine framework V (for examples, see AC P0DQQ7 and AC P81755).</text>
</comment>
<comment type="miscellaneous">
    <text evidence="5">Negative results: does not have the ability to interact with the G-protein coupled somatostatin type 3 receptor (SSTR3).</text>
</comment>
<comment type="similarity">
    <text evidence="4">Belongs to the conotoxin T superfamily.</text>
</comment>
<proteinExistence type="evidence at transcript level"/>
<reference key="1">
    <citation type="journal article" date="2006" name="Chem. Biol. Drug Des.">
        <title>Identification and molecular diversity of T-superfamily conotoxins from Conus lividus and Conus litteratus.</title>
        <authorList>
            <person name="Luo S."/>
            <person name="Zhangsun D."/>
            <person name="Wu Y."/>
            <person name="Zhu X."/>
            <person name="Xie L."/>
            <person name="Hu Y."/>
            <person name="Zhang J."/>
            <person name="Zhao X."/>
        </authorList>
    </citation>
    <scope>NUCLEOTIDE SEQUENCE [MRNA]</scope>
    <source>
        <tissue>Venom duct</tissue>
    </source>
</reference>
<reference key="2">
    <citation type="journal article" date="2013" name="Biochem. Pharmacol.">
        <title>Identification, structural and pharmacological characterization of tau-CnVA, a conopeptide that selectively interacts with somatostatin sst receptor.</title>
        <authorList>
            <person name="Petrel C."/>
            <person name="Hocking H.G."/>
            <person name="Reynaud M."/>
            <person name="Upert G."/>
            <person name="Favreau P."/>
            <person name="Biass D."/>
            <person name="Paolini-Bertrand M."/>
            <person name="Peigneur S."/>
            <person name="Tytgat J."/>
            <person name="Gilles N."/>
            <person name="Hartley O."/>
            <person name="Boelens R."/>
            <person name="Stocklin R."/>
            <person name="Servent D."/>
        </authorList>
    </citation>
    <scope>SYNTHESIS OF 51-65</scope>
</reference>
<name>CT192_CONLT</name>
<protein>
    <recommendedName>
        <fullName evidence="3">Conotoxin LeDr192</fullName>
    </recommendedName>
</protein>
<accession>Q3YEH1</accession>
<dbReference type="EMBL" id="DQ141142">
    <property type="protein sequence ID" value="AAZ85407.1"/>
    <property type="molecule type" value="mRNA"/>
</dbReference>
<dbReference type="SMR" id="Q3YEH1"/>
<dbReference type="ConoServer" id="1679">
    <property type="toxin name" value="Lt5.1 precursor"/>
</dbReference>
<dbReference type="GO" id="GO:0005576">
    <property type="term" value="C:extracellular region"/>
    <property type="evidence" value="ECO:0007669"/>
    <property type="project" value="UniProtKB-SubCell"/>
</dbReference>
<dbReference type="GO" id="GO:0090729">
    <property type="term" value="F:toxin activity"/>
    <property type="evidence" value="ECO:0007669"/>
    <property type="project" value="UniProtKB-KW"/>
</dbReference>
<dbReference type="InterPro" id="IPR031565">
    <property type="entry name" value="T-conotoxin"/>
</dbReference>
<dbReference type="Pfam" id="PF16981">
    <property type="entry name" value="Chi-conotoxin"/>
    <property type="match status" value="1"/>
</dbReference>